<dbReference type="EMBL" id="AE000657">
    <property type="protein sequence ID" value="AAC07676.1"/>
    <property type="molecule type" value="Genomic_DNA"/>
</dbReference>
<dbReference type="PIR" id="F70460">
    <property type="entry name" value="F70460"/>
</dbReference>
<dbReference type="RefSeq" id="NP_214280.1">
    <property type="nucleotide sequence ID" value="NC_000918.1"/>
</dbReference>
<dbReference type="RefSeq" id="WP_010881216.1">
    <property type="nucleotide sequence ID" value="NC_000918.1"/>
</dbReference>
<dbReference type="SMR" id="O67712"/>
<dbReference type="STRING" id="224324.aq_1860"/>
<dbReference type="EnsemblBacteria" id="AAC07676">
    <property type="protein sequence ID" value="AAC07676"/>
    <property type="gene ID" value="aq_1860"/>
</dbReference>
<dbReference type="KEGG" id="aae:aq_1860"/>
<dbReference type="PATRIC" id="fig|224324.8.peg.1442"/>
<dbReference type="eggNOG" id="COG1580">
    <property type="taxonomic scope" value="Bacteria"/>
</dbReference>
<dbReference type="HOGENOM" id="CLU_099018_2_0_0"/>
<dbReference type="InParanoid" id="O67712"/>
<dbReference type="OrthoDB" id="9799777at2"/>
<dbReference type="Proteomes" id="UP000000798">
    <property type="component" value="Chromosome"/>
</dbReference>
<dbReference type="GO" id="GO:0009425">
    <property type="term" value="C:bacterial-type flagellum basal body"/>
    <property type="evidence" value="ECO:0007669"/>
    <property type="project" value="InterPro"/>
</dbReference>
<dbReference type="GO" id="GO:0005886">
    <property type="term" value="C:plasma membrane"/>
    <property type="evidence" value="ECO:0007669"/>
    <property type="project" value="UniProtKB-SubCell"/>
</dbReference>
<dbReference type="GO" id="GO:0071978">
    <property type="term" value="P:bacterial-type flagellum-dependent swarming motility"/>
    <property type="evidence" value="ECO:0000318"/>
    <property type="project" value="GO_Central"/>
</dbReference>
<dbReference type="GO" id="GO:0006935">
    <property type="term" value="P:chemotaxis"/>
    <property type="evidence" value="ECO:0007669"/>
    <property type="project" value="UniProtKB-KW"/>
</dbReference>
<dbReference type="InterPro" id="IPR005503">
    <property type="entry name" value="FliL"/>
</dbReference>
<dbReference type="PANTHER" id="PTHR35091">
    <property type="entry name" value="FLAGELLAR PROTEIN FLIL"/>
    <property type="match status" value="1"/>
</dbReference>
<dbReference type="PANTHER" id="PTHR35091:SF2">
    <property type="entry name" value="FLAGELLAR PROTEIN FLIL"/>
    <property type="match status" value="1"/>
</dbReference>
<dbReference type="Pfam" id="PF03748">
    <property type="entry name" value="FliL"/>
    <property type="match status" value="1"/>
</dbReference>
<feature type="chain" id="PRO_0000180910" description="Flagellar protein FliL">
    <location>
        <begin position="1"/>
        <end position="161"/>
    </location>
</feature>
<feature type="transmembrane region" description="Helical" evidence="2">
    <location>
        <begin position="18"/>
        <end position="38"/>
    </location>
</feature>
<organism>
    <name type="scientific">Aquifex aeolicus (strain VF5)</name>
    <dbReference type="NCBI Taxonomy" id="224324"/>
    <lineage>
        <taxon>Bacteria</taxon>
        <taxon>Pseudomonadati</taxon>
        <taxon>Aquificota</taxon>
        <taxon>Aquificia</taxon>
        <taxon>Aquificales</taxon>
        <taxon>Aquificaceae</taxon>
        <taxon>Aquifex</taxon>
    </lineage>
</organism>
<sequence>MAEEVREEAQAGGGKKKLIFLLLLLILLAGAGAGAYFFLFAKKEEKKEEKAPKVAPPEVGIMYKLDPPFIVNLADPEATVYARISITLEVANQQVLQEVQKKEPVIRDAIIEIISSKTSNEIRTPEGREQLKLEVLKRINTILSEGGVRNVYFTEFVIQVE</sequence>
<protein>
    <recommendedName>
        <fullName>Flagellar protein FliL</fullName>
    </recommendedName>
</protein>
<keyword id="KW-1003">Cell membrane</keyword>
<keyword id="KW-0145">Chemotaxis</keyword>
<keyword id="KW-0283">Flagellar rotation</keyword>
<keyword id="KW-0472">Membrane</keyword>
<keyword id="KW-1185">Reference proteome</keyword>
<keyword id="KW-0812">Transmembrane</keyword>
<keyword id="KW-1133">Transmembrane helix</keyword>
<accession>O67712</accession>
<reference key="1">
    <citation type="journal article" date="1998" name="Nature">
        <title>The complete genome of the hyperthermophilic bacterium Aquifex aeolicus.</title>
        <authorList>
            <person name="Deckert G."/>
            <person name="Warren P.V."/>
            <person name="Gaasterland T."/>
            <person name="Young W.G."/>
            <person name="Lenox A.L."/>
            <person name="Graham D.E."/>
            <person name="Overbeek R."/>
            <person name="Snead M.A."/>
            <person name="Keller M."/>
            <person name="Aujay M."/>
            <person name="Huber R."/>
            <person name="Feldman R.A."/>
            <person name="Short J.M."/>
            <person name="Olsen G.J."/>
            <person name="Swanson R.V."/>
        </authorList>
    </citation>
    <scope>NUCLEOTIDE SEQUENCE [LARGE SCALE GENOMIC DNA]</scope>
    <source>
        <strain>VF5</strain>
    </source>
</reference>
<proteinExistence type="inferred from homology"/>
<name>FLIL_AQUAE</name>
<comment type="function">
    <text evidence="1">Controls the rotational direction of flagella during chemotaxis.</text>
</comment>
<comment type="subcellular location">
    <subcellularLocation>
        <location evidence="3">Cell membrane</location>
        <topology evidence="3">Single-pass membrane protein</topology>
    </subcellularLocation>
</comment>
<comment type="similarity">
    <text evidence="3">Belongs to the FliL family.</text>
</comment>
<evidence type="ECO:0000250" key="1"/>
<evidence type="ECO:0000255" key="2"/>
<evidence type="ECO:0000305" key="3"/>
<gene>
    <name type="primary">fliL</name>
    <name type="ordered locus">aq_1860</name>
</gene>